<keyword id="KW-0028">Amino-acid biosynthesis</keyword>
<keyword id="KW-0057">Aromatic amino acid biosynthesis</keyword>
<keyword id="KW-0328">Glycosyltransferase</keyword>
<keyword id="KW-0460">Magnesium</keyword>
<keyword id="KW-0479">Metal-binding</keyword>
<keyword id="KW-0808">Transferase</keyword>
<keyword id="KW-0822">Tryptophan biosynthesis</keyword>
<protein>
    <recommendedName>
        <fullName evidence="1">Anthranilate phosphoribosyltransferase</fullName>
        <ecNumber evidence="1">2.4.2.18</ecNumber>
    </recommendedName>
</protein>
<organism>
    <name type="scientific">Acinetobacter baumannii (strain AYE)</name>
    <dbReference type="NCBI Taxonomy" id="509173"/>
    <lineage>
        <taxon>Bacteria</taxon>
        <taxon>Pseudomonadati</taxon>
        <taxon>Pseudomonadota</taxon>
        <taxon>Gammaproteobacteria</taxon>
        <taxon>Moraxellales</taxon>
        <taxon>Moraxellaceae</taxon>
        <taxon>Acinetobacter</taxon>
        <taxon>Acinetobacter calcoaceticus/baumannii complex</taxon>
    </lineage>
</organism>
<comment type="function">
    <text evidence="1">Catalyzes the transfer of the phosphoribosyl group of 5-phosphorylribose-1-pyrophosphate (PRPP) to anthranilate to yield N-(5'-phosphoribosyl)-anthranilate (PRA).</text>
</comment>
<comment type="catalytic activity">
    <reaction evidence="1">
        <text>N-(5-phospho-beta-D-ribosyl)anthranilate + diphosphate = 5-phospho-alpha-D-ribose 1-diphosphate + anthranilate</text>
        <dbReference type="Rhea" id="RHEA:11768"/>
        <dbReference type="ChEBI" id="CHEBI:16567"/>
        <dbReference type="ChEBI" id="CHEBI:18277"/>
        <dbReference type="ChEBI" id="CHEBI:33019"/>
        <dbReference type="ChEBI" id="CHEBI:58017"/>
        <dbReference type="EC" id="2.4.2.18"/>
    </reaction>
</comment>
<comment type="cofactor">
    <cofactor evidence="1">
        <name>Mg(2+)</name>
        <dbReference type="ChEBI" id="CHEBI:18420"/>
    </cofactor>
    <text evidence="1">Binds 2 magnesium ions per monomer.</text>
</comment>
<comment type="pathway">
    <text evidence="1">Amino-acid biosynthesis; L-tryptophan biosynthesis; L-tryptophan from chorismate: step 2/5.</text>
</comment>
<comment type="subunit">
    <text evidence="1">Homodimer.</text>
</comment>
<comment type="similarity">
    <text evidence="1">Belongs to the anthranilate phosphoribosyltransferase family.</text>
</comment>
<proteinExistence type="inferred from homology"/>
<gene>
    <name evidence="1" type="primary">trpD</name>
    <name type="ordered locus">ABAYE1119</name>
</gene>
<dbReference type="EC" id="2.4.2.18" evidence="1"/>
<dbReference type="EMBL" id="CU459141">
    <property type="protein sequence ID" value="CAM86047.1"/>
    <property type="molecule type" value="Genomic_DNA"/>
</dbReference>
<dbReference type="RefSeq" id="WP_001982145.1">
    <property type="nucleotide sequence ID" value="NZ_JBDGFB010000024.1"/>
</dbReference>
<dbReference type="SMR" id="B0VBS2"/>
<dbReference type="EnsemblBacteria" id="CAM86047">
    <property type="protein sequence ID" value="CAM86047"/>
    <property type="gene ID" value="ABAYE1119"/>
</dbReference>
<dbReference type="KEGG" id="aby:ABAYE1119"/>
<dbReference type="HOGENOM" id="CLU_034315_2_1_6"/>
<dbReference type="UniPathway" id="UPA00035">
    <property type="reaction ID" value="UER00041"/>
</dbReference>
<dbReference type="GO" id="GO:0005829">
    <property type="term" value="C:cytosol"/>
    <property type="evidence" value="ECO:0007669"/>
    <property type="project" value="TreeGrafter"/>
</dbReference>
<dbReference type="GO" id="GO:0004048">
    <property type="term" value="F:anthranilate phosphoribosyltransferase activity"/>
    <property type="evidence" value="ECO:0007669"/>
    <property type="project" value="UniProtKB-UniRule"/>
</dbReference>
<dbReference type="GO" id="GO:0000287">
    <property type="term" value="F:magnesium ion binding"/>
    <property type="evidence" value="ECO:0007669"/>
    <property type="project" value="UniProtKB-UniRule"/>
</dbReference>
<dbReference type="GO" id="GO:0000162">
    <property type="term" value="P:L-tryptophan biosynthetic process"/>
    <property type="evidence" value="ECO:0007669"/>
    <property type="project" value="UniProtKB-UniRule"/>
</dbReference>
<dbReference type="FunFam" id="1.20.970.10:FF:000006">
    <property type="entry name" value="Anthranilate phosphoribosyltransferase"/>
    <property type="match status" value="1"/>
</dbReference>
<dbReference type="FunFam" id="3.40.1030.10:FF:000002">
    <property type="entry name" value="Anthranilate phosphoribosyltransferase"/>
    <property type="match status" value="1"/>
</dbReference>
<dbReference type="Gene3D" id="3.40.1030.10">
    <property type="entry name" value="Nucleoside phosphorylase/phosphoribosyltransferase catalytic domain"/>
    <property type="match status" value="1"/>
</dbReference>
<dbReference type="Gene3D" id="1.20.970.10">
    <property type="entry name" value="Transferase, Pyrimidine Nucleoside Phosphorylase, Chain C"/>
    <property type="match status" value="1"/>
</dbReference>
<dbReference type="HAMAP" id="MF_00211">
    <property type="entry name" value="TrpD"/>
    <property type="match status" value="1"/>
</dbReference>
<dbReference type="InterPro" id="IPR005940">
    <property type="entry name" value="Anthranilate_Pribosyl_Tfrase"/>
</dbReference>
<dbReference type="InterPro" id="IPR000312">
    <property type="entry name" value="Glycosyl_Trfase_fam3"/>
</dbReference>
<dbReference type="InterPro" id="IPR017459">
    <property type="entry name" value="Glycosyl_Trfase_fam3_N_dom"/>
</dbReference>
<dbReference type="InterPro" id="IPR036320">
    <property type="entry name" value="Glycosyl_Trfase_fam3_N_dom_sf"/>
</dbReference>
<dbReference type="InterPro" id="IPR035902">
    <property type="entry name" value="Nuc_phospho_transferase"/>
</dbReference>
<dbReference type="NCBIfam" id="TIGR01245">
    <property type="entry name" value="trpD"/>
    <property type="match status" value="1"/>
</dbReference>
<dbReference type="PANTHER" id="PTHR43285">
    <property type="entry name" value="ANTHRANILATE PHOSPHORIBOSYLTRANSFERASE"/>
    <property type="match status" value="1"/>
</dbReference>
<dbReference type="PANTHER" id="PTHR43285:SF2">
    <property type="entry name" value="ANTHRANILATE PHOSPHORIBOSYLTRANSFERASE"/>
    <property type="match status" value="1"/>
</dbReference>
<dbReference type="Pfam" id="PF02885">
    <property type="entry name" value="Glycos_trans_3N"/>
    <property type="match status" value="1"/>
</dbReference>
<dbReference type="Pfam" id="PF00591">
    <property type="entry name" value="Glycos_transf_3"/>
    <property type="match status" value="1"/>
</dbReference>
<dbReference type="SUPFAM" id="SSF52418">
    <property type="entry name" value="Nucleoside phosphorylase/phosphoribosyltransferase catalytic domain"/>
    <property type="match status" value="1"/>
</dbReference>
<dbReference type="SUPFAM" id="SSF47648">
    <property type="entry name" value="Nucleoside phosphorylase/phosphoribosyltransferase N-terminal domain"/>
    <property type="match status" value="1"/>
</dbReference>
<reference key="1">
    <citation type="journal article" date="2008" name="PLoS ONE">
        <title>Comparative analysis of Acinetobacters: three genomes for three lifestyles.</title>
        <authorList>
            <person name="Vallenet D."/>
            <person name="Nordmann P."/>
            <person name="Barbe V."/>
            <person name="Poirel L."/>
            <person name="Mangenot S."/>
            <person name="Bataille E."/>
            <person name="Dossat C."/>
            <person name="Gas S."/>
            <person name="Kreimeyer A."/>
            <person name="Lenoble P."/>
            <person name="Oztas S."/>
            <person name="Poulain J."/>
            <person name="Segurens B."/>
            <person name="Robert C."/>
            <person name="Abergel C."/>
            <person name="Claverie J.-M."/>
            <person name="Raoult D."/>
            <person name="Medigue C."/>
            <person name="Weissenbach J."/>
            <person name="Cruveiller S."/>
        </authorList>
    </citation>
    <scope>NUCLEOTIDE SEQUENCE [LARGE SCALE GENOMIC DNA]</scope>
    <source>
        <strain>AYE</strain>
    </source>
</reference>
<name>TRPD_ACIBY</name>
<evidence type="ECO:0000255" key="1">
    <source>
        <dbReference type="HAMAP-Rule" id="MF_00211"/>
    </source>
</evidence>
<feature type="chain" id="PRO_1000099773" description="Anthranilate phosphoribosyltransferase">
    <location>
        <begin position="1"/>
        <end position="349"/>
    </location>
</feature>
<feature type="binding site" evidence="1">
    <location>
        <position position="82"/>
    </location>
    <ligand>
        <name>5-phospho-alpha-D-ribose 1-diphosphate</name>
        <dbReference type="ChEBI" id="CHEBI:58017"/>
    </ligand>
</feature>
<feature type="binding site" evidence="1">
    <location>
        <position position="82"/>
    </location>
    <ligand>
        <name>anthranilate</name>
        <dbReference type="ChEBI" id="CHEBI:16567"/>
        <label>1</label>
    </ligand>
</feature>
<feature type="binding site" evidence="1">
    <location>
        <begin position="85"/>
        <end position="86"/>
    </location>
    <ligand>
        <name>5-phospho-alpha-D-ribose 1-diphosphate</name>
        <dbReference type="ChEBI" id="CHEBI:58017"/>
    </ligand>
</feature>
<feature type="binding site" evidence="1">
    <location>
        <begin position="92"/>
        <end position="95"/>
    </location>
    <ligand>
        <name>5-phospho-alpha-D-ribose 1-diphosphate</name>
        <dbReference type="ChEBI" id="CHEBI:58017"/>
    </ligand>
</feature>
<feature type="binding site" evidence="1">
    <location>
        <position position="94"/>
    </location>
    <ligand>
        <name>Mg(2+)</name>
        <dbReference type="ChEBI" id="CHEBI:18420"/>
        <label>1</label>
    </ligand>
</feature>
<feature type="binding site" evidence="1">
    <location>
        <begin position="110"/>
        <end position="118"/>
    </location>
    <ligand>
        <name>5-phospho-alpha-D-ribose 1-diphosphate</name>
        <dbReference type="ChEBI" id="CHEBI:58017"/>
    </ligand>
</feature>
<feature type="binding site" evidence="1">
    <location>
        <position position="113"/>
    </location>
    <ligand>
        <name>anthranilate</name>
        <dbReference type="ChEBI" id="CHEBI:16567"/>
        <label>1</label>
    </ligand>
</feature>
<feature type="binding site" evidence="1">
    <location>
        <position position="122"/>
    </location>
    <ligand>
        <name>5-phospho-alpha-D-ribose 1-diphosphate</name>
        <dbReference type="ChEBI" id="CHEBI:58017"/>
    </ligand>
</feature>
<feature type="binding site" evidence="1">
    <location>
        <position position="168"/>
    </location>
    <ligand>
        <name>anthranilate</name>
        <dbReference type="ChEBI" id="CHEBI:16567"/>
        <label>2</label>
    </ligand>
</feature>
<feature type="binding site" evidence="1">
    <location>
        <position position="227"/>
    </location>
    <ligand>
        <name>Mg(2+)</name>
        <dbReference type="ChEBI" id="CHEBI:18420"/>
        <label>2</label>
    </ligand>
</feature>
<feature type="binding site" evidence="1">
    <location>
        <position position="228"/>
    </location>
    <ligand>
        <name>Mg(2+)</name>
        <dbReference type="ChEBI" id="CHEBI:18420"/>
        <label>1</label>
    </ligand>
</feature>
<feature type="binding site" evidence="1">
    <location>
        <position position="228"/>
    </location>
    <ligand>
        <name>Mg(2+)</name>
        <dbReference type="ChEBI" id="CHEBI:18420"/>
        <label>2</label>
    </ligand>
</feature>
<sequence length="349" mass="37403">MNIQQALNHITKNIHLTQPQMEEIMRSIMQGEATEAQIGALMMGLRMKGESIDEMTAAARVMREFAIKIDVSDIKHLVDIVGTGGDGQNLFNVSTASSFVIAAAGATIAKHGNRGVSSKSGSSDLLEQAGIHLDLDMQQTERCIREMGVGFLFAPNHHKAMKYAAGPRRELGIRSIFNLLGPLTNPAGVKRFVIGVFSDELCRPIAEVMKQLGAEHVMVVHSKDGLDEISLAAPTTIAELKDGEITEWTLNPEDVGIESQTLNGLVVADATASLKLIKDALSKNKSDIGEKAANMIALNAGAGIYVAGITKTYAQAVAFAQDIIYGGQALEKMSVLAEFTKTLKQSQAD</sequence>
<accession>B0VBS2</accession>